<evidence type="ECO:0000250" key="1"/>
<evidence type="ECO:0000256" key="2">
    <source>
        <dbReference type="SAM" id="MobiDB-lite"/>
    </source>
</evidence>
<evidence type="ECO:0000305" key="3"/>
<organism>
    <name type="scientific">Candida glabrata (strain ATCC 2001 / BCRC 20586 / JCM 3761 / NBRC 0622 / NRRL Y-65 / CBS 138)</name>
    <name type="common">Yeast</name>
    <name type="synonym">Nakaseomyces glabratus</name>
    <dbReference type="NCBI Taxonomy" id="284593"/>
    <lineage>
        <taxon>Eukaryota</taxon>
        <taxon>Fungi</taxon>
        <taxon>Dikarya</taxon>
        <taxon>Ascomycota</taxon>
        <taxon>Saccharomycotina</taxon>
        <taxon>Saccharomycetes</taxon>
        <taxon>Saccharomycetales</taxon>
        <taxon>Saccharomycetaceae</taxon>
        <taxon>Nakaseomyces</taxon>
    </lineage>
</organism>
<protein>
    <recommendedName>
        <fullName>WD repeat-containing protein JIP5</fullName>
    </recommendedName>
</protein>
<name>JIP5_CANGA</name>
<feature type="chain" id="PRO_0000333553" description="WD repeat-containing protein JIP5">
    <location>
        <begin position="1"/>
        <end position="508"/>
    </location>
</feature>
<feature type="repeat" description="WD 1">
    <location>
        <begin position="62"/>
        <end position="105"/>
    </location>
</feature>
<feature type="repeat" description="WD 2">
    <location>
        <begin position="106"/>
        <end position="145"/>
    </location>
</feature>
<feature type="repeat" description="WD 3">
    <location>
        <begin position="149"/>
        <end position="188"/>
    </location>
</feature>
<feature type="repeat" description="WD 4">
    <location>
        <begin position="193"/>
        <end position="233"/>
    </location>
</feature>
<feature type="repeat" description="WD 5">
    <location>
        <begin position="253"/>
        <end position="294"/>
    </location>
</feature>
<feature type="repeat" description="WD 6">
    <location>
        <begin position="345"/>
        <end position="382"/>
    </location>
</feature>
<feature type="repeat" description="WD 7">
    <location>
        <begin position="431"/>
        <end position="472"/>
    </location>
</feature>
<feature type="region of interest" description="Disordered" evidence="2">
    <location>
        <begin position="376"/>
        <end position="508"/>
    </location>
</feature>
<feature type="compositionally biased region" description="Acidic residues" evidence="2">
    <location>
        <begin position="380"/>
        <end position="393"/>
    </location>
</feature>
<feature type="compositionally biased region" description="Low complexity" evidence="2">
    <location>
        <begin position="407"/>
        <end position="419"/>
    </location>
</feature>
<feature type="compositionally biased region" description="Acidic residues" evidence="2">
    <location>
        <begin position="441"/>
        <end position="454"/>
    </location>
</feature>
<feature type="compositionally biased region" description="Basic and acidic residues" evidence="2">
    <location>
        <begin position="455"/>
        <end position="466"/>
    </location>
</feature>
<feature type="compositionally biased region" description="Basic residues" evidence="2">
    <location>
        <begin position="478"/>
        <end position="492"/>
    </location>
</feature>
<sequence>MGKKKTSVVQSDELPVIEFRYAEPLFQFVCHPEEPMVVSALATGHVLCHRYDAELLTEKLREARKVQEAVKVEEKKQTLWTVVDVDAADKHPVLPSGVTLLWRTKRHKGSVRALAIDHDGKHVYTIGADNVLKKADTHSGKVVKKVTLDGGSKVTKLVKSATHDFLVMGDEVGTIVVLDSNDLTTKNTLTKIHGGDAINDIFQFCKRSVYKYISLGQTTLAYWDTREPKMKQPKKNSGNQTEEELSNIMCSDDQEDEILCGAFVDPIEGDTLVCGMGEGTLTVWKPKKNDLEDQLTRVKIAKGESIDTVISTLQDDNCVWCGCSNGLLYKVDTKRGKIVEIRKHSGLDEVGMLDLDFEYRLVSGGMDKLKIWEVPKEENSDSDSDSDINDDSEAGLSSSEDSDSDSELGSGSESEVESDASSKSDSDLEECTGSDLPGDIEGSEGENNSNDDDNHDDREELWKELDQPTSDEEEPPKKRSLKVKDKKNKKFKKNENNLSHGITKFDGL</sequence>
<proteinExistence type="inferred from homology"/>
<keyword id="KW-0539">Nucleus</keyword>
<keyword id="KW-1185">Reference proteome</keyword>
<keyword id="KW-0677">Repeat</keyword>
<keyword id="KW-0853">WD repeat</keyword>
<gene>
    <name type="primary">JIP5</name>
    <name type="ordered locus">CAGL0I06490g</name>
</gene>
<reference key="1">
    <citation type="journal article" date="2004" name="Nature">
        <title>Genome evolution in yeasts.</title>
        <authorList>
            <person name="Dujon B."/>
            <person name="Sherman D."/>
            <person name="Fischer G."/>
            <person name="Durrens P."/>
            <person name="Casaregola S."/>
            <person name="Lafontaine I."/>
            <person name="de Montigny J."/>
            <person name="Marck C."/>
            <person name="Neuveglise C."/>
            <person name="Talla E."/>
            <person name="Goffard N."/>
            <person name="Frangeul L."/>
            <person name="Aigle M."/>
            <person name="Anthouard V."/>
            <person name="Babour A."/>
            <person name="Barbe V."/>
            <person name="Barnay S."/>
            <person name="Blanchin S."/>
            <person name="Beckerich J.-M."/>
            <person name="Beyne E."/>
            <person name="Bleykasten C."/>
            <person name="Boisrame A."/>
            <person name="Boyer J."/>
            <person name="Cattolico L."/>
            <person name="Confanioleri F."/>
            <person name="de Daruvar A."/>
            <person name="Despons L."/>
            <person name="Fabre E."/>
            <person name="Fairhead C."/>
            <person name="Ferry-Dumazet H."/>
            <person name="Groppi A."/>
            <person name="Hantraye F."/>
            <person name="Hennequin C."/>
            <person name="Jauniaux N."/>
            <person name="Joyet P."/>
            <person name="Kachouri R."/>
            <person name="Kerrest A."/>
            <person name="Koszul R."/>
            <person name="Lemaire M."/>
            <person name="Lesur I."/>
            <person name="Ma L."/>
            <person name="Muller H."/>
            <person name="Nicaud J.-M."/>
            <person name="Nikolski M."/>
            <person name="Oztas S."/>
            <person name="Ozier-Kalogeropoulos O."/>
            <person name="Pellenz S."/>
            <person name="Potier S."/>
            <person name="Richard G.-F."/>
            <person name="Straub M.-L."/>
            <person name="Suleau A."/>
            <person name="Swennen D."/>
            <person name="Tekaia F."/>
            <person name="Wesolowski-Louvel M."/>
            <person name="Westhof E."/>
            <person name="Wirth B."/>
            <person name="Zeniou-Meyer M."/>
            <person name="Zivanovic Y."/>
            <person name="Bolotin-Fukuhara M."/>
            <person name="Thierry A."/>
            <person name="Bouchier C."/>
            <person name="Caudron B."/>
            <person name="Scarpelli C."/>
            <person name="Gaillardin C."/>
            <person name="Weissenbach J."/>
            <person name="Wincker P."/>
            <person name="Souciet J.-L."/>
        </authorList>
    </citation>
    <scope>NUCLEOTIDE SEQUENCE [LARGE SCALE GENOMIC DNA]</scope>
    <source>
        <strain>ATCC 2001 / BCRC 20586 / JCM 3761 / NBRC 0622 / NRRL Y-65 / CBS 138</strain>
    </source>
</reference>
<dbReference type="EMBL" id="CR380955">
    <property type="protein sequence ID" value="CAG60469.1"/>
    <property type="molecule type" value="Genomic_DNA"/>
</dbReference>
<dbReference type="RefSeq" id="XP_447532.1">
    <property type="nucleotide sequence ID" value="XM_447532.1"/>
</dbReference>
<dbReference type="SMR" id="Q6FQG2"/>
<dbReference type="FunCoup" id="Q6FQG2">
    <property type="interactions" value="132"/>
</dbReference>
<dbReference type="STRING" id="284593.Q6FQG2"/>
<dbReference type="EnsemblFungi" id="CAGL0I06490g-T">
    <property type="protein sequence ID" value="CAGL0I06490g-T-p1"/>
    <property type="gene ID" value="CAGL0I06490g"/>
</dbReference>
<dbReference type="KEGG" id="cgr:2889131"/>
<dbReference type="CGD" id="CAL0132614">
    <property type="gene designation" value="CAGL0I06490g"/>
</dbReference>
<dbReference type="VEuPathDB" id="FungiDB:CAGL0I06490g"/>
<dbReference type="eggNOG" id="KOG2444">
    <property type="taxonomic scope" value="Eukaryota"/>
</dbReference>
<dbReference type="HOGENOM" id="CLU_035623_0_0_1"/>
<dbReference type="InParanoid" id="Q6FQG2"/>
<dbReference type="OMA" id="DDNCIWC"/>
<dbReference type="Proteomes" id="UP000002428">
    <property type="component" value="Chromosome I"/>
</dbReference>
<dbReference type="GO" id="GO:0005730">
    <property type="term" value="C:nucleolus"/>
    <property type="evidence" value="ECO:0007669"/>
    <property type="project" value="UniProtKB-SubCell"/>
</dbReference>
<dbReference type="GO" id="GO:0045943">
    <property type="term" value="P:positive regulation of transcription by RNA polymerase I"/>
    <property type="evidence" value="ECO:0007669"/>
    <property type="project" value="TreeGrafter"/>
</dbReference>
<dbReference type="GO" id="GO:0042273">
    <property type="term" value="P:ribosomal large subunit biogenesis"/>
    <property type="evidence" value="ECO:0007669"/>
    <property type="project" value="EnsemblFungi"/>
</dbReference>
<dbReference type="GO" id="GO:0006364">
    <property type="term" value="P:rRNA processing"/>
    <property type="evidence" value="ECO:0007669"/>
    <property type="project" value="TreeGrafter"/>
</dbReference>
<dbReference type="Gene3D" id="2.130.10.10">
    <property type="entry name" value="YVTN repeat-like/Quinoprotein amine dehydrogenase"/>
    <property type="match status" value="2"/>
</dbReference>
<dbReference type="InterPro" id="IPR015943">
    <property type="entry name" value="WD40/YVTN_repeat-like_dom_sf"/>
</dbReference>
<dbReference type="InterPro" id="IPR036322">
    <property type="entry name" value="WD40_repeat_dom_sf"/>
</dbReference>
<dbReference type="InterPro" id="IPR001680">
    <property type="entry name" value="WD40_rpt"/>
</dbReference>
<dbReference type="PANTHER" id="PTHR19924">
    <property type="entry name" value="UTP15 U3 SMALL NUCLEOLAR RNA-ASSOCIATED PROTEIN 15 FAMILY MEMBER"/>
    <property type="match status" value="1"/>
</dbReference>
<dbReference type="PANTHER" id="PTHR19924:SF31">
    <property type="entry name" value="WD REPEAT-CONTAINING PROTEIN JIP5"/>
    <property type="match status" value="1"/>
</dbReference>
<dbReference type="SMART" id="SM00320">
    <property type="entry name" value="WD40"/>
    <property type="match status" value="2"/>
</dbReference>
<dbReference type="SUPFAM" id="SSF50978">
    <property type="entry name" value="WD40 repeat-like"/>
    <property type="match status" value="1"/>
</dbReference>
<accession>Q6FQG2</accession>
<comment type="subcellular location">
    <subcellularLocation>
        <location evidence="1">Nucleus</location>
        <location evidence="1">Nucleolus</location>
    </subcellularLocation>
</comment>
<comment type="similarity">
    <text evidence="3">Belongs to the WD repeat WDR55 family.</text>
</comment>